<comment type="function">
    <text evidence="1">Essential subunit of the Sec protein translocation channel SecYEG. Clamps together the 2 halves of SecY. May contact the channel plug during translocation.</text>
</comment>
<comment type="subunit">
    <text evidence="1">Component of the Sec protein translocase complex. Heterotrimer consisting of SecY, SecE and SecG subunits. The heterotrimers can form oligomers, although 1 heterotrimer is thought to be able to translocate proteins. Interacts with the ribosome. Interacts with SecDF, and other proteins may be involved. Interacts with SecA.</text>
</comment>
<comment type="subcellular location">
    <subcellularLocation>
        <location evidence="1">Cell inner membrane</location>
        <topology evidence="1">Multi-pass membrane protein</topology>
    </subcellularLocation>
</comment>
<comment type="similarity">
    <text evidence="1">Belongs to the SecE/SEC61-gamma family.</text>
</comment>
<dbReference type="EMBL" id="BA000003">
    <property type="protein sequence ID" value="BAB12767.1"/>
    <property type="molecule type" value="Genomic_DNA"/>
</dbReference>
<dbReference type="RefSeq" id="NP_239881.1">
    <property type="nucleotide sequence ID" value="NC_002528.1"/>
</dbReference>
<dbReference type="RefSeq" id="WP_010895914.1">
    <property type="nucleotide sequence ID" value="NC_002528.1"/>
</dbReference>
<dbReference type="STRING" id="563178.BUAP5A_039"/>
<dbReference type="EnsemblBacteria" id="BAB12767">
    <property type="protein sequence ID" value="BAB12767"/>
    <property type="gene ID" value="BAB12767"/>
</dbReference>
<dbReference type="KEGG" id="buc:BU040"/>
<dbReference type="PATRIC" id="fig|107806.10.peg.53"/>
<dbReference type="eggNOG" id="COG0690">
    <property type="taxonomic scope" value="Bacteria"/>
</dbReference>
<dbReference type="HOGENOM" id="CLU_113663_0_1_6"/>
<dbReference type="Proteomes" id="UP000001806">
    <property type="component" value="Chromosome"/>
</dbReference>
<dbReference type="GO" id="GO:0005886">
    <property type="term" value="C:plasma membrane"/>
    <property type="evidence" value="ECO:0007669"/>
    <property type="project" value="UniProtKB-SubCell"/>
</dbReference>
<dbReference type="GO" id="GO:0008320">
    <property type="term" value="F:protein transmembrane transporter activity"/>
    <property type="evidence" value="ECO:0007669"/>
    <property type="project" value="UniProtKB-UniRule"/>
</dbReference>
<dbReference type="GO" id="GO:0065002">
    <property type="term" value="P:intracellular protein transmembrane transport"/>
    <property type="evidence" value="ECO:0007669"/>
    <property type="project" value="UniProtKB-UniRule"/>
</dbReference>
<dbReference type="GO" id="GO:0009306">
    <property type="term" value="P:protein secretion"/>
    <property type="evidence" value="ECO:0007669"/>
    <property type="project" value="UniProtKB-UniRule"/>
</dbReference>
<dbReference type="GO" id="GO:0006605">
    <property type="term" value="P:protein targeting"/>
    <property type="evidence" value="ECO:0007669"/>
    <property type="project" value="UniProtKB-UniRule"/>
</dbReference>
<dbReference type="GO" id="GO:0043952">
    <property type="term" value="P:protein transport by the Sec complex"/>
    <property type="evidence" value="ECO:0007669"/>
    <property type="project" value="UniProtKB-UniRule"/>
</dbReference>
<dbReference type="Gene3D" id="1.20.5.1030">
    <property type="entry name" value="Preprotein translocase secy subunit"/>
    <property type="match status" value="1"/>
</dbReference>
<dbReference type="HAMAP" id="MF_00422">
    <property type="entry name" value="SecE"/>
    <property type="match status" value="1"/>
</dbReference>
<dbReference type="InterPro" id="IPR005807">
    <property type="entry name" value="SecE_bac"/>
</dbReference>
<dbReference type="InterPro" id="IPR038379">
    <property type="entry name" value="SecE_sf"/>
</dbReference>
<dbReference type="InterPro" id="IPR001901">
    <property type="entry name" value="Translocase_SecE/Sec61-g"/>
</dbReference>
<dbReference type="NCBIfam" id="TIGR00964">
    <property type="entry name" value="secE_bact"/>
    <property type="match status" value="1"/>
</dbReference>
<dbReference type="PANTHER" id="PTHR33910">
    <property type="entry name" value="PROTEIN TRANSLOCASE SUBUNIT SECE"/>
    <property type="match status" value="1"/>
</dbReference>
<dbReference type="PANTHER" id="PTHR33910:SF1">
    <property type="entry name" value="PROTEIN TRANSLOCASE SUBUNIT SECE"/>
    <property type="match status" value="1"/>
</dbReference>
<dbReference type="Pfam" id="PF00584">
    <property type="entry name" value="SecE"/>
    <property type="match status" value="1"/>
</dbReference>
<dbReference type="PRINTS" id="PR01650">
    <property type="entry name" value="SECETRNLCASE"/>
</dbReference>
<organism>
    <name type="scientific">Buchnera aphidicola subsp. Acyrthosiphon pisum (strain APS)</name>
    <name type="common">Acyrthosiphon pisum symbiotic bacterium</name>
    <dbReference type="NCBI Taxonomy" id="107806"/>
    <lineage>
        <taxon>Bacteria</taxon>
        <taxon>Pseudomonadati</taxon>
        <taxon>Pseudomonadota</taxon>
        <taxon>Gammaproteobacteria</taxon>
        <taxon>Enterobacterales</taxon>
        <taxon>Erwiniaceae</taxon>
        <taxon>Buchnera</taxon>
    </lineage>
</organism>
<proteinExistence type="inferred from homology"/>
<protein>
    <recommendedName>
        <fullName evidence="1">Protein translocase subunit SecE</fullName>
    </recommendedName>
</protein>
<evidence type="ECO:0000255" key="1">
    <source>
        <dbReference type="HAMAP-Rule" id="MF_00422"/>
    </source>
</evidence>
<reference key="1">
    <citation type="journal article" date="2000" name="Nature">
        <title>Genome sequence of the endocellular bacterial symbiont of aphids Buchnera sp. APS.</title>
        <authorList>
            <person name="Shigenobu S."/>
            <person name="Watanabe H."/>
            <person name="Hattori M."/>
            <person name="Sakaki Y."/>
            <person name="Ishikawa H."/>
        </authorList>
    </citation>
    <scope>NUCLEOTIDE SEQUENCE [LARGE SCALE GENOMIC DNA]</scope>
    <source>
        <strain>APS</strain>
    </source>
</reference>
<gene>
    <name evidence="1" type="primary">secE</name>
    <name type="ordered locus">BU040</name>
</gene>
<name>SECE_BUCAI</name>
<sequence length="127" mass="15326">MNKHHYNRNKHKIPEKVKWISISIFFILSFFINMCFYETQLFIRIFIISCLMLCAIGTMIYTKKGKDILLYIVMSKKEMQKIIWPKYKETLYTTFIVISVTIFISFILWSIDSVIFRLIAFIISLRF</sequence>
<feature type="chain" id="PRO_0000104160" description="Protein translocase subunit SecE">
    <location>
        <begin position="1"/>
        <end position="127"/>
    </location>
</feature>
<feature type="transmembrane region" description="Helical" evidence="1">
    <location>
        <begin position="17"/>
        <end position="37"/>
    </location>
</feature>
<feature type="transmembrane region" description="Helical" evidence="1">
    <location>
        <begin position="41"/>
        <end position="61"/>
    </location>
</feature>
<feature type="transmembrane region" description="Helical" evidence="1">
    <location>
        <begin position="95"/>
        <end position="115"/>
    </location>
</feature>
<keyword id="KW-0997">Cell inner membrane</keyword>
<keyword id="KW-1003">Cell membrane</keyword>
<keyword id="KW-0472">Membrane</keyword>
<keyword id="KW-0653">Protein transport</keyword>
<keyword id="KW-1185">Reference proteome</keyword>
<keyword id="KW-0811">Translocation</keyword>
<keyword id="KW-0812">Transmembrane</keyword>
<keyword id="KW-1133">Transmembrane helix</keyword>
<keyword id="KW-0813">Transport</keyword>
<accession>P57152</accession>